<reference key="1">
    <citation type="journal article" date="2000" name="Blood">
        <title>Human erythrocyte pyrimidine 5'-nucleotidase, PN-I, is identical to p36, a protein associated to lupus inclusion formation in response to alpha-interferon.</title>
        <authorList>
            <person name="Amici A."/>
            <person name="Emanuelli M."/>
            <person name="Raffaelli N."/>
            <person name="Ruggieri S."/>
            <person name="Saccucci F."/>
            <person name="Magni G."/>
        </authorList>
    </citation>
    <scope>NUCLEOTIDE SEQUENCE [MRNA] (ISOFORM 2)</scope>
    <scope>PROTEIN SEQUENCE OF 92-111; 131-155; 226-240; 268-296 AND 313-332</scope>
    <source>
        <tissue>Placenta</tissue>
    </source>
</reference>
<reference key="2">
    <citation type="journal article" date="2001" name="Blood">
        <title>Genetic basis of hemolytic anemia caused by pyrimidine 5' nucleotidase deficiency.</title>
        <authorList>
            <person name="Marinaki A.M."/>
            <person name="Escuredo E."/>
            <person name="Duley J.A."/>
            <person name="Simmonds H.A."/>
            <person name="Amici A."/>
            <person name="Naponelli V."/>
            <person name="Magni G."/>
            <person name="Seip M."/>
            <person name="Ben-Bassat I."/>
            <person name="Harley E.H."/>
            <person name="Thein S.L."/>
            <person name="Rees D.C."/>
        </authorList>
    </citation>
    <scope>NUCLEOTIDE SEQUENCE [MRNA] (ISOFORMS 1 AND 3)</scope>
    <scope>TISSUE SPECIFICITY</scope>
    <scope>VARIANT P5ND VAL-137</scope>
</reference>
<reference key="3">
    <citation type="journal article" date="2001" name="Genome Res.">
        <title>Towards a catalog of human genes and proteins: sequencing and analysis of 500 novel complete protein coding human cDNAs.</title>
        <authorList>
            <person name="Wiemann S."/>
            <person name="Weil B."/>
            <person name="Wellenreuther R."/>
            <person name="Gassenhuber J."/>
            <person name="Glassl S."/>
            <person name="Ansorge W."/>
            <person name="Boecher M."/>
            <person name="Bloecker H."/>
            <person name="Bauersachs S."/>
            <person name="Blum H."/>
            <person name="Lauber J."/>
            <person name="Duesterhoeft A."/>
            <person name="Beyer A."/>
            <person name="Koehrer K."/>
            <person name="Strack N."/>
            <person name="Mewes H.-W."/>
            <person name="Ottenwaelder B."/>
            <person name="Obermaier B."/>
            <person name="Tampe J."/>
            <person name="Heubner D."/>
            <person name="Wambutt R."/>
            <person name="Korn B."/>
            <person name="Klein M."/>
            <person name="Poustka A."/>
        </authorList>
    </citation>
    <scope>NUCLEOTIDE SEQUENCE [LARGE SCALE MRNA] (ISOFORM 2)</scope>
    <source>
        <tissue>Kidney</tissue>
    </source>
</reference>
<reference key="4">
    <citation type="journal article" date="2004" name="Nat. Genet.">
        <title>Complete sequencing and characterization of 21,243 full-length human cDNAs.</title>
        <authorList>
            <person name="Ota T."/>
            <person name="Suzuki Y."/>
            <person name="Nishikawa T."/>
            <person name="Otsuki T."/>
            <person name="Sugiyama T."/>
            <person name="Irie R."/>
            <person name="Wakamatsu A."/>
            <person name="Hayashi K."/>
            <person name="Sato H."/>
            <person name="Nagai K."/>
            <person name="Kimura K."/>
            <person name="Makita H."/>
            <person name="Sekine M."/>
            <person name="Obayashi M."/>
            <person name="Nishi T."/>
            <person name="Shibahara T."/>
            <person name="Tanaka T."/>
            <person name="Ishii S."/>
            <person name="Yamamoto J."/>
            <person name="Saito K."/>
            <person name="Kawai Y."/>
            <person name="Isono Y."/>
            <person name="Nakamura Y."/>
            <person name="Nagahari K."/>
            <person name="Murakami K."/>
            <person name="Yasuda T."/>
            <person name="Iwayanagi T."/>
            <person name="Wagatsuma M."/>
            <person name="Shiratori A."/>
            <person name="Sudo H."/>
            <person name="Hosoiri T."/>
            <person name="Kaku Y."/>
            <person name="Kodaira H."/>
            <person name="Kondo H."/>
            <person name="Sugawara M."/>
            <person name="Takahashi M."/>
            <person name="Kanda K."/>
            <person name="Yokoi T."/>
            <person name="Furuya T."/>
            <person name="Kikkawa E."/>
            <person name="Omura Y."/>
            <person name="Abe K."/>
            <person name="Kamihara K."/>
            <person name="Katsuta N."/>
            <person name="Sato K."/>
            <person name="Tanikawa M."/>
            <person name="Yamazaki M."/>
            <person name="Ninomiya K."/>
            <person name="Ishibashi T."/>
            <person name="Yamashita H."/>
            <person name="Murakawa K."/>
            <person name="Fujimori K."/>
            <person name="Tanai H."/>
            <person name="Kimata M."/>
            <person name="Watanabe M."/>
            <person name="Hiraoka S."/>
            <person name="Chiba Y."/>
            <person name="Ishida S."/>
            <person name="Ono Y."/>
            <person name="Takiguchi S."/>
            <person name="Watanabe S."/>
            <person name="Yosida M."/>
            <person name="Hotuta T."/>
            <person name="Kusano J."/>
            <person name="Kanehori K."/>
            <person name="Takahashi-Fujii A."/>
            <person name="Hara H."/>
            <person name="Tanase T.-O."/>
            <person name="Nomura Y."/>
            <person name="Togiya S."/>
            <person name="Komai F."/>
            <person name="Hara R."/>
            <person name="Takeuchi K."/>
            <person name="Arita M."/>
            <person name="Imose N."/>
            <person name="Musashino K."/>
            <person name="Yuuki H."/>
            <person name="Oshima A."/>
            <person name="Sasaki N."/>
            <person name="Aotsuka S."/>
            <person name="Yoshikawa Y."/>
            <person name="Matsunawa H."/>
            <person name="Ichihara T."/>
            <person name="Shiohata N."/>
            <person name="Sano S."/>
            <person name="Moriya S."/>
            <person name="Momiyama H."/>
            <person name="Satoh N."/>
            <person name="Takami S."/>
            <person name="Terashima Y."/>
            <person name="Suzuki O."/>
            <person name="Nakagawa S."/>
            <person name="Senoh A."/>
            <person name="Mizoguchi H."/>
            <person name="Goto Y."/>
            <person name="Shimizu F."/>
            <person name="Wakebe H."/>
            <person name="Hishigaki H."/>
            <person name="Watanabe T."/>
            <person name="Sugiyama A."/>
            <person name="Takemoto M."/>
            <person name="Kawakami B."/>
            <person name="Yamazaki M."/>
            <person name="Watanabe K."/>
            <person name="Kumagai A."/>
            <person name="Itakura S."/>
            <person name="Fukuzumi Y."/>
            <person name="Fujimori Y."/>
            <person name="Komiyama M."/>
            <person name="Tashiro H."/>
            <person name="Tanigami A."/>
            <person name="Fujiwara T."/>
            <person name="Ono T."/>
            <person name="Yamada K."/>
            <person name="Fujii Y."/>
            <person name="Ozaki K."/>
            <person name="Hirao M."/>
            <person name="Ohmori Y."/>
            <person name="Kawabata A."/>
            <person name="Hikiji T."/>
            <person name="Kobatake N."/>
            <person name="Inagaki H."/>
            <person name="Ikema Y."/>
            <person name="Okamoto S."/>
            <person name="Okitani R."/>
            <person name="Kawakami T."/>
            <person name="Noguchi S."/>
            <person name="Itoh T."/>
            <person name="Shigeta K."/>
            <person name="Senba T."/>
            <person name="Matsumura K."/>
            <person name="Nakajima Y."/>
            <person name="Mizuno T."/>
            <person name="Morinaga M."/>
            <person name="Sasaki M."/>
            <person name="Togashi T."/>
            <person name="Oyama M."/>
            <person name="Hata H."/>
            <person name="Watanabe M."/>
            <person name="Komatsu T."/>
            <person name="Mizushima-Sugano J."/>
            <person name="Satoh T."/>
            <person name="Shirai Y."/>
            <person name="Takahashi Y."/>
            <person name="Nakagawa K."/>
            <person name="Okumura K."/>
            <person name="Nagase T."/>
            <person name="Nomura N."/>
            <person name="Kikuchi H."/>
            <person name="Masuho Y."/>
            <person name="Yamashita R."/>
            <person name="Nakai K."/>
            <person name="Yada T."/>
            <person name="Nakamura Y."/>
            <person name="Ohara O."/>
            <person name="Isogai T."/>
            <person name="Sugano S."/>
        </authorList>
    </citation>
    <scope>NUCLEOTIDE SEQUENCE [LARGE SCALE MRNA] (ISOFORMS 2 AND 3)</scope>
    <source>
        <tissue>Brain cortex</tissue>
        <tissue>Thalamus</tissue>
    </source>
</reference>
<reference key="5">
    <citation type="submission" date="2004-06" db="EMBL/GenBank/DDBJ databases">
        <title>Cloning of human full open reading frames in Gateway(TM) system entry vector (pDONR201).</title>
        <authorList>
            <person name="Ebert L."/>
            <person name="Schick M."/>
            <person name="Neubert P."/>
            <person name="Schatten R."/>
            <person name="Henze S."/>
            <person name="Korn B."/>
        </authorList>
    </citation>
    <scope>NUCLEOTIDE SEQUENCE [LARGE SCALE MRNA] (ISOFORM 2)</scope>
</reference>
<reference key="6">
    <citation type="journal article" date="2003" name="Nature">
        <title>The DNA sequence of human chromosome 7.</title>
        <authorList>
            <person name="Hillier L.W."/>
            <person name="Fulton R.S."/>
            <person name="Fulton L.A."/>
            <person name="Graves T.A."/>
            <person name="Pepin K.H."/>
            <person name="Wagner-McPherson C."/>
            <person name="Layman D."/>
            <person name="Maas J."/>
            <person name="Jaeger S."/>
            <person name="Walker R."/>
            <person name="Wylie K."/>
            <person name="Sekhon M."/>
            <person name="Becker M.C."/>
            <person name="O'Laughlin M.D."/>
            <person name="Schaller M.E."/>
            <person name="Fewell G.A."/>
            <person name="Delehaunty K.D."/>
            <person name="Miner T.L."/>
            <person name="Nash W.E."/>
            <person name="Cordes M."/>
            <person name="Du H."/>
            <person name="Sun H."/>
            <person name="Edwards J."/>
            <person name="Bradshaw-Cordum H."/>
            <person name="Ali J."/>
            <person name="Andrews S."/>
            <person name="Isak A."/>
            <person name="Vanbrunt A."/>
            <person name="Nguyen C."/>
            <person name="Du F."/>
            <person name="Lamar B."/>
            <person name="Courtney L."/>
            <person name="Kalicki J."/>
            <person name="Ozersky P."/>
            <person name="Bielicki L."/>
            <person name="Scott K."/>
            <person name="Holmes A."/>
            <person name="Harkins R."/>
            <person name="Harris A."/>
            <person name="Strong C.M."/>
            <person name="Hou S."/>
            <person name="Tomlinson C."/>
            <person name="Dauphin-Kohlberg S."/>
            <person name="Kozlowicz-Reilly A."/>
            <person name="Leonard S."/>
            <person name="Rohlfing T."/>
            <person name="Rock S.M."/>
            <person name="Tin-Wollam A.-M."/>
            <person name="Abbott A."/>
            <person name="Minx P."/>
            <person name="Maupin R."/>
            <person name="Strowmatt C."/>
            <person name="Latreille P."/>
            <person name="Miller N."/>
            <person name="Johnson D."/>
            <person name="Murray J."/>
            <person name="Woessner J.P."/>
            <person name="Wendl M.C."/>
            <person name="Yang S.-P."/>
            <person name="Schultz B.R."/>
            <person name="Wallis J.W."/>
            <person name="Spieth J."/>
            <person name="Bieri T.A."/>
            <person name="Nelson J.O."/>
            <person name="Berkowicz N."/>
            <person name="Wohldmann P.E."/>
            <person name="Cook L.L."/>
            <person name="Hickenbotham M.T."/>
            <person name="Eldred J."/>
            <person name="Williams D."/>
            <person name="Bedell J.A."/>
            <person name="Mardis E.R."/>
            <person name="Clifton S.W."/>
            <person name="Chissoe S.L."/>
            <person name="Marra M.A."/>
            <person name="Raymond C."/>
            <person name="Haugen E."/>
            <person name="Gillett W."/>
            <person name="Zhou Y."/>
            <person name="James R."/>
            <person name="Phelps K."/>
            <person name="Iadanoto S."/>
            <person name="Bubb K."/>
            <person name="Simms E."/>
            <person name="Levy R."/>
            <person name="Clendenning J."/>
            <person name="Kaul R."/>
            <person name="Kent W.J."/>
            <person name="Furey T.S."/>
            <person name="Baertsch R.A."/>
            <person name="Brent M.R."/>
            <person name="Keibler E."/>
            <person name="Flicek P."/>
            <person name="Bork P."/>
            <person name="Suyama M."/>
            <person name="Bailey J.A."/>
            <person name="Portnoy M.E."/>
            <person name="Torrents D."/>
            <person name="Chinwalla A.T."/>
            <person name="Gish W.R."/>
            <person name="Eddy S.R."/>
            <person name="McPherson J.D."/>
            <person name="Olson M.V."/>
            <person name="Eichler E.E."/>
            <person name="Green E.D."/>
            <person name="Waterston R.H."/>
            <person name="Wilson R.K."/>
        </authorList>
    </citation>
    <scope>NUCLEOTIDE SEQUENCE [LARGE SCALE GENOMIC DNA]</scope>
</reference>
<reference key="7">
    <citation type="submission" date="2005-07" db="EMBL/GenBank/DDBJ databases">
        <authorList>
            <person name="Mural R.J."/>
            <person name="Istrail S."/>
            <person name="Sutton G.G."/>
            <person name="Florea L."/>
            <person name="Halpern A.L."/>
            <person name="Mobarry C.M."/>
            <person name="Lippert R."/>
            <person name="Walenz B."/>
            <person name="Shatkay H."/>
            <person name="Dew I."/>
            <person name="Miller J.R."/>
            <person name="Flanigan M.J."/>
            <person name="Edwards N.J."/>
            <person name="Bolanos R."/>
            <person name="Fasulo D."/>
            <person name="Halldorsson B.V."/>
            <person name="Hannenhalli S."/>
            <person name="Turner R."/>
            <person name="Yooseph S."/>
            <person name="Lu F."/>
            <person name="Nusskern D.R."/>
            <person name="Shue B.C."/>
            <person name="Zheng X.H."/>
            <person name="Zhong F."/>
            <person name="Delcher A.L."/>
            <person name="Huson D.H."/>
            <person name="Kravitz S.A."/>
            <person name="Mouchard L."/>
            <person name="Reinert K."/>
            <person name="Remington K.A."/>
            <person name="Clark A.G."/>
            <person name="Waterman M.S."/>
            <person name="Eichler E.E."/>
            <person name="Adams M.D."/>
            <person name="Hunkapiller M.W."/>
            <person name="Myers E.W."/>
            <person name="Venter J.C."/>
        </authorList>
    </citation>
    <scope>NUCLEOTIDE SEQUENCE [LARGE SCALE GENOMIC DNA]</scope>
</reference>
<reference key="8">
    <citation type="journal article" date="2004" name="Genome Res.">
        <title>The status, quality, and expansion of the NIH full-length cDNA project: the Mammalian Gene Collection (MGC).</title>
        <authorList>
            <consortium name="The MGC Project Team"/>
        </authorList>
    </citation>
    <scope>NUCLEOTIDE SEQUENCE [LARGE SCALE MRNA] (ISOFORMS 1 AND 2)</scope>
    <source>
        <tissue>Brain</tissue>
        <tissue>Lung</tissue>
        <tissue>Muscle</tissue>
        <tissue>Prostate</tissue>
    </source>
</reference>
<reference key="9">
    <citation type="journal article" date="2000" name="Genome Res.">
        <title>Cloning and functional analysis of cDNAs with open reading frames for 300 previously undefined genes expressed in CD34+ hematopoietic stem/progenitor cells.</title>
        <authorList>
            <person name="Zhang Q.-H."/>
            <person name="Ye M."/>
            <person name="Wu X.-Y."/>
            <person name="Ren S.-X."/>
            <person name="Zhao M."/>
            <person name="Zhao C.-J."/>
            <person name="Fu G."/>
            <person name="Shen Y."/>
            <person name="Fan H.-Y."/>
            <person name="Lu G."/>
            <person name="Zhong M."/>
            <person name="Xu X.-R."/>
            <person name="Han Z.-G."/>
            <person name="Zhang J.-W."/>
            <person name="Tao J."/>
            <person name="Huang Q.-H."/>
            <person name="Zhou J."/>
            <person name="Hu G.-X."/>
            <person name="Gu J."/>
            <person name="Chen S.-J."/>
            <person name="Chen Z."/>
        </authorList>
    </citation>
    <scope>NUCLEOTIDE SEQUENCE [LARGE SCALE MRNA] OF 29-336 (ISOFORM 2)</scope>
    <source>
        <tissue>Umbilical cord blood</tissue>
    </source>
</reference>
<reference key="10">
    <citation type="journal article" date="1996" name="J. Biol. Chem.">
        <title>Purification, microsequencing, and immunolocalization of p36, a new interferon-alpha-induced protein that is associated with human lupus inclusions.</title>
        <authorList>
            <person name="Rich S.A."/>
            <person name="Bose M."/>
            <person name="Tempst P."/>
            <person name="Rudofsky U.H."/>
        </authorList>
    </citation>
    <scope>PROTEIN SEQUENCE OF 83-95; 131-147; 226-240; 268-296 AND 311-329</scope>
    <scope>INDUCTION</scope>
    <scope>SUBCELLULAR LOCATION</scope>
</reference>
<reference key="11">
    <citation type="journal article" date="2005" name="Blood">
        <title>Functional analysis of pyrimidine 5'-nucleotidase mutants causing nonspherocytic hemolytic anemia.</title>
        <authorList>
            <person name="Chiarelli L.R."/>
            <person name="Bianchi P."/>
            <person name="Fermo E."/>
            <person name="Galizzi A."/>
            <person name="Iadarola P."/>
            <person name="Mattevi A."/>
            <person name="Zanella A."/>
            <person name="Valentini G."/>
        </authorList>
    </citation>
    <scope>CHARACTERIZATION OF P5ND VAL-137; PRO-181; SER-229 AND ARG-280</scope>
</reference>
<reference key="12">
    <citation type="journal article" date="2005" name="Cell. Mol. Life Sci.">
        <title>Evidence for essential catalytic determinants for human erythrocyte pyrimidine 5'-nucleotidase.</title>
        <authorList>
            <person name="Amici A."/>
            <person name="Ciccioli K."/>
            <person name="Naponelli V."/>
            <person name="Raffaelli N."/>
            <person name="Magni G."/>
        </authorList>
    </citation>
    <scope>FUNCTION</scope>
    <scope>BIOPHYSICOCHEMICAL PROPERTIES</scope>
    <scope>CATALYTIC ACTIVITY</scope>
    <scope>CHARACTERIZATION OF VARIANTS P5ND SER-229 AND ARG-280</scope>
    <scope>MUTAGENESIS OF ASP-88; PHE-89; ASP-90; GLU-135; ASP-232; PHE-233 AND ASP-234</scope>
</reference>
<reference key="13">
    <citation type="journal article" date="2011" name="BMC Syst. Biol.">
        <title>Initial characterization of the human central proteome.</title>
        <authorList>
            <person name="Burkard T.R."/>
            <person name="Planyavsky M."/>
            <person name="Kaupe I."/>
            <person name="Breitwieser F.P."/>
            <person name="Buerckstuemmer T."/>
            <person name="Bennett K.L."/>
            <person name="Superti-Furga G."/>
            <person name="Colinge J."/>
        </authorList>
    </citation>
    <scope>IDENTIFICATION BY MASS SPECTROMETRY [LARGE SCALE ANALYSIS]</scope>
</reference>
<reference key="14">
    <citation type="journal article" date="2012" name="Proc. Natl. Acad. Sci. U.S.A.">
        <title>N-terminal acetylome analyses and functional insights of the N-terminal acetyltransferase NatB.</title>
        <authorList>
            <person name="Van Damme P."/>
            <person name="Lasa M."/>
            <person name="Polevoda B."/>
            <person name="Gazquez C."/>
            <person name="Elosegui-Artola A."/>
            <person name="Kim D.S."/>
            <person name="De Juan-Pardo E."/>
            <person name="Demeyer K."/>
            <person name="Hole K."/>
            <person name="Larrea E."/>
            <person name="Timmerman E."/>
            <person name="Prieto J."/>
            <person name="Arnesen T."/>
            <person name="Sherman F."/>
            <person name="Gevaert K."/>
            <person name="Aldabe R."/>
        </authorList>
    </citation>
    <scope>IDENTIFICATION BY MASS SPECTROMETRY [LARGE SCALE ANALYSIS]</scope>
</reference>
<reference key="15">
    <citation type="journal article" date="2014" name="PLoS ONE">
        <title>Crystal structures of the novel cytosolic 5'-nucleotidase IIIB explain its preference for m7GMP.</title>
        <authorList>
            <person name="Monecke T."/>
            <person name="Buschmann J."/>
            <person name="Neumann P."/>
            <person name="Wahle E."/>
            <person name="Ficner R."/>
        </authorList>
    </citation>
    <scope>FUNCTION</scope>
    <scope>CATALYTIC ACTIVITY</scope>
    <scope>BIOPHYSICOCHEMICAL PROPERTIES</scope>
</reference>
<reference key="16">
    <citation type="journal article" date="2007" name="J. Biol. Chem.">
        <title>Crystal structure of human cytosolic 5'-nucleotidase II: insights into allosteric regulation and substrate recognition.</title>
        <authorList>
            <person name="Wallden K."/>
            <person name="Stenmark P."/>
            <person name="Nyman T."/>
            <person name="Flodin S."/>
            <person name="Graeslund S."/>
            <person name="Loppnau P."/>
            <person name="Bianchi V."/>
            <person name="Nordlund P."/>
        </authorList>
    </citation>
    <scope>X-RAY CRYSTALLOGRAPHY (2.67 ANGSTROMS) OF 64-336 IN COMPLEX WITH PHOSPHATE AND MAGNESIUM IONS</scope>
    <scope>ACTIVE SITE</scope>
    <scope>METAL BINDING</scope>
</reference>
<reference key="17">
    <citation type="journal article" date="2003" name="Br. J. Haematol.">
        <title>Molecular characterization of six unrelated Italian patients affected by pyrimidine 5'-nucleotidase deficiency.</title>
        <authorList>
            <person name="Bianchi P."/>
            <person name="Fermo E."/>
            <person name="Alfinito F."/>
            <person name="Vercellati C."/>
            <person name="Baserga M."/>
            <person name="Ferraro F."/>
            <person name="Guzzo I."/>
            <person name="Rotoli B."/>
            <person name="Zanella A."/>
        </authorList>
    </citation>
    <scope>VARIANT P5ND SER-229</scope>
</reference>
<reference key="18">
    <citation type="journal article" date="2004" name="Br. J. Haematol.">
        <title>Molecular basis of Japanese variants of pyrimidine 5'-nucleotidase deficiency.</title>
        <authorList>
            <person name="Kanno H."/>
            <person name="Takizawa T."/>
            <person name="Miwa S."/>
            <person name="Fujii H."/>
        </authorList>
    </citation>
    <scope>VARIANTS P5ND PRO-181 AND ARG-280</scope>
    <scope>IDENTIFICATION OF ISOFORM 4</scope>
    <scope>TISSUE SPECIFICITY</scope>
    <scope>CHARACTERIZATION OF VARIANTS P5ND PRO-181 AND ARG-280</scope>
</reference>
<reference key="19">
    <citation type="journal article" date="2006" name="Haematologica">
        <title>Molecular characterization of five Portuguese patients with pyrimidine 5'-nucleotidase deficient hemolytic anemia showing three new P5'N-I mutations.</title>
        <authorList>
            <person name="Manco L."/>
            <person name="Relvas L."/>
            <person name="Silva Pinto C."/>
            <person name="Pereira J."/>
            <person name="Almeida A.B."/>
            <person name="Ribeiro M.L."/>
        </authorList>
    </citation>
    <scope>VARIANTS P5ND PRO-181; ARG-207 AND THR-297</scope>
</reference>
<reference key="20">
    <citation type="journal article" date="2008" name="Blood Cells Mol. Dis.">
        <title>Molecular basis of pyrimidine 5'-nucleotidase deficiency caused by 3 newly identified missense mutations (c.187T&gt;C, c.469G&gt;C and c.740T&gt;C) and a tabulation of known mutations.</title>
        <authorList>
            <person name="Chiarelli L.R."/>
            <person name="Morera S.M."/>
            <person name="Galizzi A."/>
            <person name="Fermo E."/>
            <person name="Zanella A."/>
            <person name="Valentini G."/>
        </authorList>
    </citation>
    <scope>CHARACTERIZATION OF VARIANTS P5ND ARG-113; ARG-207 AND THR-297</scope>
</reference>
<reference key="21">
    <citation type="journal article" date="2014" name="Blood Cells Mol. Dis.">
        <title>Pyrimidine-5'-nucleotidase Campinas, a new mutation (p.R56G) in the NT5C3 gene associated with pyrimidine-5'-nucleotidase type I deficiency and influence of Gilbert's Syndrome on clinical expression.</title>
        <authorList>
            <person name="Dos Santos A."/>
            <person name="Dantas L.E."/>
            <person name="Traina F."/>
            <person name="Albuquerque D.M."/>
            <person name="Chaim E.A."/>
            <person name="Saad S.T."/>
        </authorList>
    </citation>
    <scope>VARIANT P5ND GLY-95</scope>
</reference>
<protein>
    <recommendedName>
        <fullName evidence="19 20">Cytosolic 5'-nucleotidase 3A</fullName>
        <ecNumber evidence="7 11">3.1.3.5</ecNumber>
    </recommendedName>
    <alternativeName>
        <fullName evidence="20">7-methylguanosine phosphate-specific 5'-nucleotidase</fullName>
        <shortName>7-methylguanosine nucleotidase</shortName>
        <ecNumber evidence="11">3.1.3.91</ecNumber>
    </alternativeName>
    <alternativeName>
        <fullName>Cytosolic 5'-nucleotidase 3</fullName>
    </alternativeName>
    <alternativeName>
        <fullName>Cytosolic 5'-nucleotidase III</fullName>
        <shortName>cN-III</shortName>
    </alternativeName>
    <alternativeName>
        <fullName>Pyrimidine 5'-nucleotidase 1</fullName>
        <shortName>P5'N-1</shortName>
        <shortName>P5N-1</shortName>
        <shortName>PN-I</shortName>
    </alternativeName>
    <alternativeName>
        <fullName>Uridine 5'-monophosphate hydrolase 1</fullName>
    </alternativeName>
    <alternativeName>
        <fullName>p36</fullName>
    </alternativeName>
</protein>
<evidence type="ECO:0000250" key="1">
    <source>
        <dbReference type="UniProtKB" id="Q9D020"/>
    </source>
</evidence>
<evidence type="ECO:0000250" key="2">
    <source>
        <dbReference type="UniProtKB" id="Q9W197"/>
    </source>
</evidence>
<evidence type="ECO:0000269" key="3">
    <source>
    </source>
</evidence>
<evidence type="ECO:0000269" key="4">
    <source>
    </source>
</evidence>
<evidence type="ECO:0000269" key="5">
    <source>
    </source>
</evidence>
<evidence type="ECO:0000269" key="6">
    <source>
    </source>
</evidence>
<evidence type="ECO:0000269" key="7">
    <source>
    </source>
</evidence>
<evidence type="ECO:0000269" key="8">
    <source>
    </source>
</evidence>
<evidence type="ECO:0000269" key="9">
    <source>
    </source>
</evidence>
<evidence type="ECO:0000269" key="10">
    <source>
    </source>
</evidence>
<evidence type="ECO:0000269" key="11">
    <source>
    </source>
</evidence>
<evidence type="ECO:0000269" key="12">
    <source>
    </source>
</evidence>
<evidence type="ECO:0000269" key="13">
    <source>
    </source>
</evidence>
<evidence type="ECO:0000303" key="14">
    <source>
    </source>
</evidence>
<evidence type="ECO:0000303" key="15">
    <source>
    </source>
</evidence>
<evidence type="ECO:0000303" key="16">
    <source>
    </source>
</evidence>
<evidence type="ECO:0000303" key="17">
    <source>
    </source>
</evidence>
<evidence type="ECO:0000305" key="18"/>
<evidence type="ECO:0000305" key="19">
    <source>
    </source>
</evidence>
<evidence type="ECO:0000305" key="20">
    <source>
    </source>
</evidence>
<evidence type="ECO:0007829" key="21">
    <source>
        <dbReference type="PDB" id="2VKQ"/>
    </source>
</evidence>
<gene>
    <name type="primary">NT5C3A</name>
    <name type="synonym">NT5C3</name>
    <name type="synonym">P5N1</name>
    <name type="synonym">UMPH1</name>
    <name type="ORF">HSPC233</name>
</gene>
<dbReference type="EC" id="3.1.3.5" evidence="7 11"/>
<dbReference type="EC" id="3.1.3.91" evidence="11"/>
<dbReference type="EMBL" id="AF312735">
    <property type="protein sequence ID" value="AAG33630.1"/>
    <property type="status" value="ALT_SEQ"/>
    <property type="molecule type" value="mRNA"/>
</dbReference>
<dbReference type="EMBL" id="AL136716">
    <property type="protein sequence ID" value="CAB66650.1"/>
    <property type="molecule type" value="mRNA"/>
</dbReference>
<dbReference type="EMBL" id="AK290118">
    <property type="protein sequence ID" value="BAF82807.1"/>
    <property type="molecule type" value="mRNA"/>
</dbReference>
<dbReference type="EMBL" id="AK314109">
    <property type="protein sequence ID" value="BAG36802.1"/>
    <property type="molecule type" value="mRNA"/>
</dbReference>
<dbReference type="EMBL" id="CR533518">
    <property type="protein sequence ID" value="CAG38549.1"/>
    <property type="molecule type" value="mRNA"/>
</dbReference>
<dbReference type="EMBL" id="AC074338">
    <property type="status" value="NOT_ANNOTATED_CDS"/>
    <property type="molecule type" value="Genomic_DNA"/>
</dbReference>
<dbReference type="EMBL" id="AC083863">
    <property type="status" value="NOT_ANNOTATED_CDS"/>
    <property type="molecule type" value="Genomic_DNA"/>
</dbReference>
<dbReference type="EMBL" id="CH471073">
    <property type="protein sequence ID" value="EAW94007.1"/>
    <property type="molecule type" value="Genomic_DNA"/>
</dbReference>
<dbReference type="EMBL" id="CH471073">
    <property type="protein sequence ID" value="EAW94008.1"/>
    <property type="molecule type" value="Genomic_DNA"/>
</dbReference>
<dbReference type="EMBL" id="BC013292">
    <property type="protein sequence ID" value="AAH13292.2"/>
    <property type="molecule type" value="mRNA"/>
</dbReference>
<dbReference type="EMBL" id="BC015856">
    <property type="protein sequence ID" value="AAH15856.2"/>
    <property type="molecule type" value="mRNA"/>
</dbReference>
<dbReference type="EMBL" id="BC066914">
    <property type="protein sequence ID" value="AAH66914.1"/>
    <property type="molecule type" value="mRNA"/>
</dbReference>
<dbReference type="EMBL" id="BC071652">
    <property type="protein sequence ID" value="AAH71652.2"/>
    <property type="molecule type" value="mRNA"/>
</dbReference>
<dbReference type="EMBL" id="AF151067">
    <property type="protein sequence ID" value="AAF36153.1"/>
    <property type="status" value="ALT_INIT"/>
    <property type="molecule type" value="mRNA"/>
</dbReference>
<dbReference type="CCDS" id="CCDS34617.1">
    <molecule id="Q9H0P0-1"/>
</dbReference>
<dbReference type="CCDS" id="CCDS55101.1">
    <molecule id="Q9H0P0-3"/>
</dbReference>
<dbReference type="RefSeq" id="NP_001002009.1">
    <molecule id="Q9H0P0-1"/>
    <property type="nucleotide sequence ID" value="NM_001002009.3"/>
</dbReference>
<dbReference type="RefSeq" id="NP_001002010.1">
    <property type="nucleotide sequence ID" value="NM_001002010.2"/>
</dbReference>
<dbReference type="RefSeq" id="NP_001159590.1">
    <molecule id="Q9H0P0-3"/>
    <property type="nucleotide sequence ID" value="NM_001166118.3"/>
</dbReference>
<dbReference type="RefSeq" id="NP_001343925.1">
    <molecule id="Q9H0P0-3"/>
    <property type="nucleotide sequence ID" value="NM_001356996.3"/>
</dbReference>
<dbReference type="RefSeq" id="NP_001361265.1">
    <molecule id="Q9H0P0-3"/>
    <property type="nucleotide sequence ID" value="NM_001374336.1"/>
</dbReference>
<dbReference type="RefSeq" id="NP_001361266.1">
    <molecule id="Q9H0P0-3"/>
    <property type="nucleotide sequence ID" value="NM_001374337.1"/>
</dbReference>
<dbReference type="RefSeq" id="NP_057573.2">
    <molecule id="Q9H0P0-1"/>
    <property type="nucleotide sequence ID" value="NM_016489.14"/>
</dbReference>
<dbReference type="RefSeq" id="XP_011513711.1">
    <property type="nucleotide sequence ID" value="XM_011515409.2"/>
</dbReference>
<dbReference type="RefSeq" id="XP_047276395.1">
    <molecule id="Q9H0P0-3"/>
    <property type="nucleotide sequence ID" value="XM_047420439.1"/>
</dbReference>
<dbReference type="RefSeq" id="XP_054214304.1">
    <molecule id="Q9H0P0-3"/>
    <property type="nucleotide sequence ID" value="XM_054358329.1"/>
</dbReference>
<dbReference type="PDB" id="2CN1">
    <property type="method" value="X-ray"/>
    <property type="resolution" value="2.67 A"/>
    <property type="chains" value="A=64-336"/>
</dbReference>
<dbReference type="PDB" id="2JGA">
    <property type="method" value="X-ray"/>
    <property type="resolution" value="3.01 A"/>
    <property type="chains" value="A=64-336"/>
</dbReference>
<dbReference type="PDB" id="2VKQ">
    <property type="method" value="X-ray"/>
    <property type="resolution" value="2.50 A"/>
    <property type="chains" value="A=64-336"/>
</dbReference>
<dbReference type="PDBsum" id="2CN1"/>
<dbReference type="PDBsum" id="2JGA"/>
<dbReference type="PDBsum" id="2VKQ"/>
<dbReference type="SMR" id="Q9H0P0"/>
<dbReference type="BioGRID" id="119408">
    <property type="interactions" value="109"/>
</dbReference>
<dbReference type="FunCoup" id="Q9H0P0">
    <property type="interactions" value="2591"/>
</dbReference>
<dbReference type="IntAct" id="Q9H0P0">
    <property type="interactions" value="81"/>
</dbReference>
<dbReference type="MINT" id="Q9H0P0"/>
<dbReference type="STRING" id="9606.ENSP00000476480"/>
<dbReference type="DEPOD" id="NT5C3A"/>
<dbReference type="GlyGen" id="Q9H0P0">
    <property type="glycosylation" value="1 site, 1 O-linked glycan (1 site)"/>
</dbReference>
<dbReference type="iPTMnet" id="Q9H0P0"/>
<dbReference type="MetOSite" id="Q9H0P0"/>
<dbReference type="PhosphoSitePlus" id="Q9H0P0"/>
<dbReference type="SwissPalm" id="Q9H0P0"/>
<dbReference type="BioMuta" id="NT5C3A"/>
<dbReference type="DMDM" id="117949804"/>
<dbReference type="jPOST" id="Q9H0P0"/>
<dbReference type="MassIVE" id="Q9H0P0"/>
<dbReference type="PaxDb" id="9606-ENSP00000484415"/>
<dbReference type="PeptideAtlas" id="Q9H0P0"/>
<dbReference type="ProteomicsDB" id="80305">
    <molecule id="Q9H0P0-4"/>
</dbReference>
<dbReference type="ProteomicsDB" id="80306">
    <molecule id="Q9H0P0-1"/>
</dbReference>
<dbReference type="ProteomicsDB" id="80307">
    <molecule id="Q9H0P0-2"/>
</dbReference>
<dbReference type="ProteomicsDB" id="80308">
    <molecule id="Q9H0P0-3"/>
</dbReference>
<dbReference type="Pumba" id="Q9H0P0"/>
<dbReference type="Antibodypedia" id="26385">
    <property type="antibodies" value="179 antibodies from 27 providers"/>
</dbReference>
<dbReference type="DNASU" id="51251"/>
<dbReference type="Ensembl" id="ENST00000409467.6">
    <molecule id="Q9H0P0-3"/>
    <property type="protein sequence ID" value="ENSP00000387166.1"/>
    <property type="gene ID" value="ENSG00000122643.24"/>
</dbReference>
<dbReference type="Ensembl" id="ENST00000643244.2">
    <molecule id="Q9H0P0-1"/>
    <property type="protein sequence ID" value="ENSP00000496364.1"/>
    <property type="gene ID" value="ENSG00000122643.24"/>
</dbReference>
<dbReference type="GeneID" id="51251"/>
<dbReference type="KEGG" id="hsa:51251"/>
<dbReference type="UCSC" id="uc003tdi.5">
    <molecule id="Q9H0P0-4"/>
    <property type="organism name" value="human"/>
</dbReference>
<dbReference type="AGR" id="HGNC:17820"/>
<dbReference type="CTD" id="51251"/>
<dbReference type="DisGeNET" id="51251"/>
<dbReference type="GeneCards" id="NT5C3A"/>
<dbReference type="HGNC" id="HGNC:17820">
    <property type="gene designation" value="NT5C3A"/>
</dbReference>
<dbReference type="HPA" id="ENSG00000122643">
    <property type="expression patterns" value="Tissue enhanced (skeletal)"/>
</dbReference>
<dbReference type="MalaCards" id="NT5C3A"/>
<dbReference type="MIM" id="266120">
    <property type="type" value="phenotype"/>
</dbReference>
<dbReference type="MIM" id="606224">
    <property type="type" value="gene"/>
</dbReference>
<dbReference type="neXtProt" id="NX_Q9H0P0"/>
<dbReference type="OpenTargets" id="ENSG00000122643"/>
<dbReference type="Orphanet" id="35120">
    <property type="disease" value="Hemolytic anemia due to pyrimidine 5' nucleotidase deficiency"/>
</dbReference>
<dbReference type="PharmGKB" id="PA31802"/>
<dbReference type="VEuPathDB" id="HostDB:ENSG00000122643"/>
<dbReference type="eggNOG" id="KOG3128">
    <property type="taxonomic scope" value="Eukaryota"/>
</dbReference>
<dbReference type="GeneTree" id="ENSGT00390000012959"/>
<dbReference type="HOGENOM" id="CLU_048584_0_2_1"/>
<dbReference type="InParanoid" id="Q9H0P0"/>
<dbReference type="OrthoDB" id="10014216at2759"/>
<dbReference type="PAN-GO" id="Q9H0P0">
    <property type="GO annotations" value="2 GO annotations based on evolutionary models"/>
</dbReference>
<dbReference type="PhylomeDB" id="Q9H0P0"/>
<dbReference type="TreeFam" id="TF314663"/>
<dbReference type="BRENDA" id="3.1.3.91">
    <property type="organism ID" value="2681"/>
</dbReference>
<dbReference type="PathwayCommons" id="Q9H0P0"/>
<dbReference type="Reactome" id="R-HSA-73621">
    <molecule id="Q9H0P0-4"/>
    <property type="pathway name" value="Pyrimidine catabolism"/>
</dbReference>
<dbReference type="SABIO-RK" id="Q9H0P0"/>
<dbReference type="SignaLink" id="Q9H0P0"/>
<dbReference type="BioGRID-ORCS" id="51251">
    <property type="hits" value="55 hits in 1131 CRISPR screens"/>
</dbReference>
<dbReference type="ChiTaRS" id="NT5C3A">
    <property type="organism name" value="human"/>
</dbReference>
<dbReference type="EvolutionaryTrace" id="Q9H0P0"/>
<dbReference type="GeneWiki" id="NT5C3"/>
<dbReference type="GenomeRNAi" id="51251"/>
<dbReference type="Pharos" id="Q9H0P0">
    <property type="development level" value="Tbio"/>
</dbReference>
<dbReference type="PRO" id="PR:Q9H0P0"/>
<dbReference type="Proteomes" id="UP000005640">
    <property type="component" value="Chromosome 7"/>
</dbReference>
<dbReference type="RNAct" id="Q9H0P0">
    <property type="molecule type" value="protein"/>
</dbReference>
<dbReference type="Bgee" id="ENSG00000122643">
    <property type="expression patterns" value="Expressed in quadriceps femoris and 104 other cell types or tissues"/>
</dbReference>
<dbReference type="ExpressionAtlas" id="Q9H0P0">
    <property type="expression patterns" value="baseline and differential"/>
</dbReference>
<dbReference type="GO" id="GO:0005737">
    <property type="term" value="C:cytoplasm"/>
    <property type="evidence" value="ECO:0000314"/>
    <property type="project" value="UniProtKB"/>
</dbReference>
<dbReference type="GO" id="GO:0005829">
    <property type="term" value="C:cytosol"/>
    <property type="evidence" value="ECO:0000314"/>
    <property type="project" value="HPA"/>
</dbReference>
<dbReference type="GO" id="GO:0005783">
    <property type="term" value="C:endoplasmic reticulum"/>
    <property type="evidence" value="ECO:0000314"/>
    <property type="project" value="HPA"/>
</dbReference>
<dbReference type="GO" id="GO:0005739">
    <property type="term" value="C:mitochondrion"/>
    <property type="evidence" value="ECO:0006056"/>
    <property type="project" value="FlyBase"/>
</dbReference>
<dbReference type="GO" id="GO:0016604">
    <property type="term" value="C:nuclear body"/>
    <property type="evidence" value="ECO:0000314"/>
    <property type="project" value="HPA"/>
</dbReference>
<dbReference type="GO" id="GO:0005654">
    <property type="term" value="C:nucleoplasm"/>
    <property type="evidence" value="ECO:0000314"/>
    <property type="project" value="HPA"/>
</dbReference>
<dbReference type="GO" id="GO:0008253">
    <property type="term" value="F:5'-nucleotidase activity"/>
    <property type="evidence" value="ECO:0000314"/>
    <property type="project" value="UniProtKB"/>
</dbReference>
<dbReference type="GO" id="GO:0000287">
    <property type="term" value="F:magnesium ion binding"/>
    <property type="evidence" value="ECO:0000303"/>
    <property type="project" value="UniProtKB"/>
</dbReference>
<dbReference type="GO" id="GO:0000166">
    <property type="term" value="F:nucleotide binding"/>
    <property type="evidence" value="ECO:0007669"/>
    <property type="project" value="UniProtKB-KW"/>
</dbReference>
<dbReference type="GO" id="GO:0000215">
    <property type="term" value="F:tRNA 2'-phosphotransferase activity"/>
    <property type="evidence" value="ECO:0000304"/>
    <property type="project" value="UniProtKB"/>
</dbReference>
<dbReference type="GO" id="GO:0051607">
    <property type="term" value="P:defense response to virus"/>
    <property type="evidence" value="ECO:0000314"/>
    <property type="project" value="UniProtKB"/>
</dbReference>
<dbReference type="GO" id="GO:0009117">
    <property type="term" value="P:nucleotide metabolic process"/>
    <property type="evidence" value="ECO:0007669"/>
    <property type="project" value="UniProtKB-KW"/>
</dbReference>
<dbReference type="GO" id="GO:0006213">
    <property type="term" value="P:pyrimidine nucleoside metabolic process"/>
    <property type="evidence" value="ECO:0000303"/>
    <property type="project" value="UniProtKB"/>
</dbReference>
<dbReference type="CDD" id="cd07504">
    <property type="entry name" value="HAD_5NT"/>
    <property type="match status" value="1"/>
</dbReference>
<dbReference type="FunFam" id="1.10.150.340:FF:000001">
    <property type="entry name" value="Cytosolic 5-nucleotidase 3-like"/>
    <property type="match status" value="1"/>
</dbReference>
<dbReference type="FunFam" id="3.40.50.1000:FF:000032">
    <property type="entry name" value="Cytosolic 5-nucleotidase 3-like"/>
    <property type="match status" value="1"/>
</dbReference>
<dbReference type="Gene3D" id="3.40.50.1000">
    <property type="entry name" value="HAD superfamily/HAD-like"/>
    <property type="match status" value="1"/>
</dbReference>
<dbReference type="Gene3D" id="1.10.150.340">
    <property type="entry name" value="Pyrimidine 5'-nucleotidase (UMPH-1), N-terminal domain"/>
    <property type="match status" value="1"/>
</dbReference>
<dbReference type="InterPro" id="IPR036412">
    <property type="entry name" value="HAD-like_sf"/>
</dbReference>
<dbReference type="InterPro" id="IPR023214">
    <property type="entry name" value="HAD_sf"/>
</dbReference>
<dbReference type="InterPro" id="IPR006434">
    <property type="entry name" value="Pyrimidine_nucleotidase_eu"/>
</dbReference>
<dbReference type="NCBIfam" id="TIGR01544">
    <property type="entry name" value="HAD-SF-IE"/>
    <property type="match status" value="1"/>
</dbReference>
<dbReference type="PANTHER" id="PTHR13045">
    <property type="entry name" value="5'-NUCLEOTIDASE"/>
    <property type="match status" value="1"/>
</dbReference>
<dbReference type="PANTHER" id="PTHR13045:SF14">
    <property type="entry name" value="CYTOSOLIC 5'-NUCLEOTIDASE 3A"/>
    <property type="match status" value="1"/>
</dbReference>
<dbReference type="Pfam" id="PF05822">
    <property type="entry name" value="UMPH-1"/>
    <property type="match status" value="1"/>
</dbReference>
<dbReference type="SFLD" id="SFLDG01128">
    <property type="entry name" value="C1.4:_5'-Nucleotidase_Like"/>
    <property type="match status" value="1"/>
</dbReference>
<dbReference type="SFLD" id="SFLDS00003">
    <property type="entry name" value="Haloacid_Dehalogenase"/>
    <property type="match status" value="1"/>
</dbReference>
<dbReference type="SUPFAM" id="SSF56784">
    <property type="entry name" value="HAD-like"/>
    <property type="match status" value="1"/>
</dbReference>
<proteinExistence type="evidence at protein level"/>
<organism>
    <name type="scientific">Homo sapiens</name>
    <name type="common">Human</name>
    <dbReference type="NCBI Taxonomy" id="9606"/>
    <lineage>
        <taxon>Eukaryota</taxon>
        <taxon>Metazoa</taxon>
        <taxon>Chordata</taxon>
        <taxon>Craniata</taxon>
        <taxon>Vertebrata</taxon>
        <taxon>Euteleostomi</taxon>
        <taxon>Mammalia</taxon>
        <taxon>Eutheria</taxon>
        <taxon>Euarchontoglires</taxon>
        <taxon>Primates</taxon>
        <taxon>Haplorrhini</taxon>
        <taxon>Catarrhini</taxon>
        <taxon>Hominidae</taxon>
        <taxon>Homo</taxon>
    </lineage>
</organism>
<accession>Q9H0P0</accession>
<accession>A8K253</accession>
<accession>B2RAA5</accession>
<accession>B8ZZC4</accession>
<accession>Q6IPZ1</accession>
<accession>Q6NXS6</accession>
<accession>Q7L3G6</accession>
<accession>Q9P0P5</accession>
<accession>Q9UC42</accession>
<accession>Q9UC43</accession>
<accession>Q9UC44</accession>
<accession>Q9UC45</accession>
<comment type="function">
    <text evidence="7 11">Nucleotidase which shows specific activity towards cytidine monophosphate (CMP) and 7-methylguanosine monophosphate (m(7)GMP) (PubMed:24603684). CMP seems to be the preferred substrate (PubMed:15968458).</text>
</comment>
<comment type="catalytic activity">
    <reaction evidence="11">
        <text>N(7)-methyl-GMP + H2O = N(7)-methylguanosine + phosphate</text>
        <dbReference type="Rhea" id="RHEA:37107"/>
        <dbReference type="ChEBI" id="CHEBI:15377"/>
        <dbReference type="ChEBI" id="CHEBI:20794"/>
        <dbReference type="ChEBI" id="CHEBI:43474"/>
        <dbReference type="ChEBI" id="CHEBI:58285"/>
        <dbReference type="EC" id="3.1.3.91"/>
    </reaction>
</comment>
<comment type="catalytic activity">
    <reaction evidence="7">
        <text>CMP + H2O = cytidine + phosphate</text>
        <dbReference type="Rhea" id="RHEA:29367"/>
        <dbReference type="ChEBI" id="CHEBI:15377"/>
        <dbReference type="ChEBI" id="CHEBI:17562"/>
        <dbReference type="ChEBI" id="CHEBI:43474"/>
        <dbReference type="ChEBI" id="CHEBI:60377"/>
        <dbReference type="EC" id="3.1.3.91"/>
    </reaction>
</comment>
<comment type="catalytic activity">
    <reaction evidence="7">
        <text>a ribonucleoside 5'-phosphate + H2O = a ribonucleoside + phosphate</text>
        <dbReference type="Rhea" id="RHEA:12484"/>
        <dbReference type="ChEBI" id="CHEBI:15377"/>
        <dbReference type="ChEBI" id="CHEBI:18254"/>
        <dbReference type="ChEBI" id="CHEBI:43474"/>
        <dbReference type="ChEBI" id="CHEBI:58043"/>
        <dbReference type="EC" id="3.1.3.5"/>
    </reaction>
</comment>
<comment type="biophysicochemical properties">
    <kinetics>
        <KM evidence="11">15 uM for m(7)GMP (at 37 degrees Celsius)</KM>
        <KM evidence="7">66 uM for CMP</KM>
        <KM evidence="11">80 uM for CMP (at 37 degrees Celsius)</KM>
    </kinetics>
</comment>
<comment type="subunit">
    <text evidence="9">Monomer.</text>
</comment>
<comment type="interaction">
    <interactant intactId="EBI-3918356">
        <id>Q9H0P0</id>
    </interactant>
    <interactant intactId="EBI-2806959">
        <id>Q6ICB0</id>
        <label>DESI1</label>
    </interactant>
    <organismsDiffer>false</organismsDiffer>
    <experiments>5</experiments>
</comment>
<comment type="interaction">
    <interactant intactId="EBI-3918356">
        <id>Q9H0P0</id>
    </interactant>
    <interactant intactId="EBI-947187">
        <id>Q9UHD9</id>
        <label>UBQLN2</label>
    </interactant>
    <organismsDiffer>false</organismsDiffer>
    <experiments>3</experiments>
</comment>
<comment type="subcellular location">
    <subcellularLocation>
        <location evidence="18">Cytoplasm</location>
    </subcellularLocation>
</comment>
<comment type="subcellular location">
    <molecule>Isoform 2</molecule>
    <subcellularLocation>
        <location>Endoplasmic reticulum</location>
    </subcellularLocation>
</comment>
<comment type="alternative products">
    <event type="alternative splicing"/>
    <isoform>
        <id>Q9H0P0-4</id>
        <name>2</name>
        <sequence type="displayed"/>
    </isoform>
    <isoform>
        <id>Q9H0P0-1</id>
        <name>1</name>
        <name>P5N-I</name>
        <sequence type="described" ref="VSP_021565"/>
    </isoform>
    <isoform>
        <id>Q9H0P0-2</id>
        <name>3</name>
        <name>p36</name>
        <sequence type="described" ref="VSP_015623"/>
    </isoform>
    <isoform>
        <id>Q9H0P0-3</id>
        <name>4</name>
        <name>P5N-R</name>
        <sequence type="described" ref="VSP_015624"/>
    </isoform>
</comment>
<comment type="tissue specificity">
    <text evidence="3 5">Isoforms 1, 3 and 4 are expressed in reticulocytes. Isoform 4 is hardly detectable in bone marrow and fetal liver.</text>
</comment>
<comment type="induction">
    <text evidence="13">Isoform 2 is induced by interferon alpha in Raji cells in association with lupus inclusions.</text>
</comment>
<comment type="disease" evidence="3 4 5 6 7 8 10 12">
    <disease id="DI-02118">
        <name>P5N deficiency</name>
        <acronym>P5ND</acronym>
        <description>Autosomal recessive condition causing hemolytic anemia characterized by marked basophilic stippling and the accumulation of high concentrations of pyrimidine nucleotides within the erythrocyte. It is implicated in the anemia of lead poisoning and is possibly associated with learning difficulties.</description>
        <dbReference type="MIM" id="266120"/>
    </disease>
    <text>The disease is caused by variants affecting the gene represented in this entry.</text>
</comment>
<comment type="similarity">
    <text evidence="18">Belongs to the pyrimidine 5'-nucleotidase family.</text>
</comment>
<comment type="sequence caution" evidence="18">
    <conflict type="erroneous initiation">
        <sequence resource="EMBL-CDS" id="AAF36153"/>
    </conflict>
    <text>Truncated N-terminus.</text>
</comment>
<comment type="sequence caution" evidence="18">
    <conflict type="frameshift">
        <sequence resource="EMBL-CDS" id="AAG33630"/>
    </conflict>
</comment>
<feature type="chain" id="PRO_0000064387" description="Cytosolic 5'-nucleotidase 3A">
    <location>
        <begin position="1"/>
        <end position="336"/>
    </location>
</feature>
<feature type="active site" description="Nucleophile" evidence="9">
    <location>
        <position position="88"/>
    </location>
</feature>
<feature type="active site" description="Proton donor" evidence="9">
    <location>
        <position position="90"/>
    </location>
</feature>
<feature type="binding site" evidence="9">
    <location>
        <position position="88"/>
    </location>
    <ligand>
        <name>Mg(2+)</name>
        <dbReference type="ChEBI" id="CHEBI:18420"/>
    </ligand>
</feature>
<feature type="binding site" evidence="9">
    <location>
        <position position="90"/>
    </location>
    <ligand>
        <name>Mg(2+)</name>
        <dbReference type="ChEBI" id="CHEBI:18420"/>
    </ligand>
</feature>
<feature type="binding site" evidence="2">
    <location>
        <position position="135"/>
    </location>
    <ligand>
        <name>CMP</name>
        <dbReference type="ChEBI" id="CHEBI:60377"/>
    </ligand>
</feature>
<feature type="binding site" evidence="2">
    <location>
        <position position="135"/>
    </location>
    <ligand>
        <name>N(7)-methyl-GMP</name>
        <dbReference type="ChEBI" id="CHEBI:58285"/>
    </ligand>
</feature>
<feature type="binding site" evidence="2">
    <location>
        <position position="156"/>
    </location>
    <ligand>
        <name>N(7)-methyl-GMP</name>
        <dbReference type="ChEBI" id="CHEBI:58285"/>
    </ligand>
</feature>
<feature type="binding site" evidence="9">
    <location>
        <begin position="203"/>
        <end position="204"/>
    </location>
    <ligand>
        <name>substrate</name>
    </ligand>
</feature>
<feature type="binding site" evidence="1">
    <location>
        <position position="252"/>
    </location>
    <ligand>
        <name>substrate</name>
    </ligand>
</feature>
<feature type="binding site" evidence="9">
    <location>
        <position position="277"/>
    </location>
    <ligand>
        <name>Mg(2+)</name>
        <dbReference type="ChEBI" id="CHEBI:18420"/>
    </ligand>
</feature>
<feature type="modified residue" description="Phosphoserine" evidence="1">
    <location>
        <position position="278"/>
    </location>
</feature>
<feature type="splice variant" id="VSP_015624" description="In isoform 4." evidence="16">
    <location>
        <begin position="1"/>
        <end position="51"/>
    </location>
</feature>
<feature type="splice variant" id="VSP_021565" description="In isoform 1." evidence="14 17">
    <original>MRAPSMDRAAVARVGAVASASVCALVAGVVLAQYIFTLKRKTGRKTKIIE</original>
    <variation>MTNQESAVHVK</variation>
    <location>
        <begin position="1"/>
        <end position="50"/>
    </location>
</feature>
<feature type="splice variant" id="VSP_015623" description="In isoform 3." evidence="14 15">
    <location>
        <begin position="1"/>
        <end position="50"/>
    </location>
</feature>
<feature type="sequence variant" id="VAR_073160" description="In P5ND; dbSNP:rs766577643." evidence="12">
    <original>R</original>
    <variation>G</variation>
    <location>
        <position position="95"/>
    </location>
</feature>
<feature type="sequence variant" id="VAR_073161" description="In P5ND; reduced catalytic activity especially towards UMP." evidence="10">
    <original>C</original>
    <variation>R</variation>
    <location>
        <position position="113"/>
    </location>
</feature>
<feature type="sequence variant" id="VAR_023511" description="In P5ND; reduced catalytic activity; dbSNP:rs104894025." evidence="3 6">
    <original>D</original>
    <variation>V</variation>
    <location>
        <position position="137"/>
    </location>
</feature>
<feature type="sequence variant" id="VAR_023512" description="In P5ND; reduced catalytic activity in vitro; reduced protein stability in vivo, probably through increased proteasomal degradation." evidence="5 6 8">
    <original>L</original>
    <variation>P</variation>
    <location>
        <position position="181"/>
    </location>
</feature>
<feature type="sequence variant" id="VAR_073162" description="In P5ND; reduced catalytic activity especially towards UMP." evidence="8 10">
    <original>G</original>
    <variation>R</variation>
    <location>
        <position position="207"/>
    </location>
</feature>
<feature type="sequence variant" id="VAR_023513" description="In P5ND; almost complete loss of catalytic activity; dbSNP:rs104894028." evidence="4 6 7">
    <original>N</original>
    <variation>S</variation>
    <location>
        <position position="229"/>
    </location>
</feature>
<feature type="sequence variant" id="VAR_023514" description="In P5ND; greatly reduced catalytic activity; dbSNP:rs104894029." evidence="5 6 7">
    <original>G</original>
    <variation>R</variation>
    <location>
        <position position="280"/>
    </location>
</feature>
<feature type="sequence variant" id="VAR_073163" description="In P5ND." evidence="8 10">
    <original>I</original>
    <variation>T</variation>
    <location>
        <position position="297"/>
    </location>
</feature>
<feature type="mutagenesis site" description="Loss of nucleotidase and phosphotransferase activity." evidence="7">
    <original>D</original>
    <variation>N</variation>
    <location>
        <position position="88"/>
    </location>
</feature>
<feature type="mutagenesis site" description="Almost complete loss of nucleotidase and phosphotransferase activity." evidence="7">
    <original>F</original>
    <variation>A</variation>
    <location>
        <position position="89"/>
    </location>
</feature>
<feature type="mutagenesis site" description="Loss of nucleotidase and phosphotransferase activity." evidence="7">
    <original>D</original>
    <variation>N</variation>
    <location>
        <position position="90"/>
    </location>
</feature>
<feature type="mutagenesis site" description="No effect on nucleotidase activity. Almost complete loss of phosphotransferase activity." evidence="7">
    <original>E</original>
    <variation>D</variation>
    <location>
        <position position="135"/>
    </location>
</feature>
<feature type="mutagenesis site" description="No effect on nucleotidase and phosphotransferase activity." evidence="7">
    <original>D</original>
    <variation>N</variation>
    <location>
        <position position="232"/>
    </location>
</feature>
<feature type="mutagenesis site" description="Almost complete loss of nucleotidase and phosphotransferase activity." evidence="7">
    <original>F</original>
    <variation>A</variation>
    <location>
        <position position="233"/>
    </location>
</feature>
<feature type="mutagenesis site" description="No effect on nucleotidase and phosphotransferase activity." evidence="7">
    <original>D</original>
    <variation>N</variation>
    <location>
        <position position="234"/>
    </location>
</feature>
<feature type="sequence conflict" description="In Ref. 10; AA sequence." evidence="18" ref="10">
    <original>R</original>
    <variation>K</variation>
    <location>
        <position position="95"/>
    </location>
</feature>
<feature type="sequence conflict" description="In Ref. 10; AA sequence." evidence="18" ref="10">
    <original>E</original>
    <variation>Q</variation>
    <location>
        <position position="144"/>
    </location>
</feature>
<feature type="sequence conflict" description="In Ref. 10; AA sequence." evidence="18" ref="10">
    <original>N</original>
    <variation>R</variation>
    <location>
        <position position="329"/>
    </location>
</feature>
<feature type="helix" evidence="21">
    <location>
        <begin position="65"/>
        <end position="78"/>
    </location>
</feature>
<feature type="helix" evidence="21">
    <location>
        <begin position="80"/>
        <end position="82"/>
    </location>
</feature>
<feature type="strand" evidence="21">
    <location>
        <begin position="83"/>
        <end position="87"/>
    </location>
</feature>
<feature type="turn" evidence="21">
    <location>
        <begin position="90"/>
        <end position="92"/>
    </location>
</feature>
<feature type="strand" evidence="21">
    <location>
        <begin position="96"/>
        <end position="98"/>
    </location>
</feature>
<feature type="helix" evidence="21">
    <location>
        <begin position="106"/>
        <end position="111"/>
    </location>
</feature>
<feature type="helix" evidence="21">
    <location>
        <begin position="118"/>
        <end position="135"/>
    </location>
</feature>
<feature type="strand" evidence="21">
    <location>
        <begin position="138"/>
        <end position="140"/>
    </location>
</feature>
<feature type="helix" evidence="21">
    <location>
        <begin position="142"/>
        <end position="163"/>
    </location>
</feature>
<feature type="helix" evidence="21">
    <location>
        <begin position="167"/>
        <end position="169"/>
    </location>
</feature>
<feature type="helix" evidence="21">
    <location>
        <begin position="170"/>
        <end position="175"/>
    </location>
</feature>
<feature type="helix" evidence="21">
    <location>
        <begin position="185"/>
        <end position="194"/>
    </location>
</feature>
<feature type="strand" evidence="21">
    <location>
        <begin position="199"/>
        <end position="206"/>
    </location>
</feature>
<feature type="helix" evidence="21">
    <location>
        <begin position="207"/>
        <end position="216"/>
    </location>
</feature>
<feature type="strand" evidence="21">
    <location>
        <begin position="224"/>
        <end position="229"/>
    </location>
</feature>
<feature type="strand" evidence="21">
    <location>
        <begin position="231"/>
        <end position="233"/>
    </location>
</feature>
<feature type="strand" evidence="21">
    <location>
        <begin position="237"/>
        <end position="242"/>
    </location>
</feature>
<feature type="helix" evidence="21">
    <location>
        <begin position="252"/>
        <end position="258"/>
    </location>
</feature>
<feature type="helix" evidence="21">
    <location>
        <begin position="260"/>
        <end position="264"/>
    </location>
</feature>
<feature type="turn" evidence="21">
    <location>
        <begin position="265"/>
        <end position="268"/>
    </location>
</feature>
<feature type="strand" evidence="21">
    <location>
        <begin position="271"/>
        <end position="279"/>
    </location>
</feature>
<feature type="helix" evidence="21">
    <location>
        <begin position="280"/>
        <end position="283"/>
    </location>
</feature>
<feature type="turn" evidence="21">
    <location>
        <begin position="284"/>
        <end position="287"/>
    </location>
</feature>
<feature type="strand" evidence="21">
    <location>
        <begin position="292"/>
        <end position="300"/>
    </location>
</feature>
<feature type="helix" evidence="21">
    <location>
        <begin position="304"/>
        <end position="312"/>
    </location>
</feature>
<feature type="strand" evidence="21">
    <location>
        <begin position="315"/>
        <end position="320"/>
    </location>
</feature>
<feature type="helix" evidence="21">
    <location>
        <begin position="326"/>
        <end position="335"/>
    </location>
</feature>
<keyword id="KW-0002">3D-structure</keyword>
<keyword id="KW-0025">Alternative splicing</keyword>
<keyword id="KW-0963">Cytoplasm</keyword>
<keyword id="KW-0903">Direct protein sequencing</keyword>
<keyword id="KW-0225">Disease variant</keyword>
<keyword id="KW-0256">Endoplasmic reticulum</keyword>
<keyword id="KW-0378">Hydrolase</keyword>
<keyword id="KW-0460">Magnesium</keyword>
<keyword id="KW-0479">Metal-binding</keyword>
<keyword id="KW-0546">Nucleotide metabolism</keyword>
<keyword id="KW-0547">Nucleotide-binding</keyword>
<keyword id="KW-0597">Phosphoprotein</keyword>
<keyword id="KW-1267">Proteomics identification</keyword>
<keyword id="KW-1185">Reference proteome</keyword>
<keyword id="KW-0808">Transferase</keyword>
<sequence length="336" mass="37948">MRAPSMDRAAVARVGAVASASVCALVAGVVLAQYIFTLKRKTGRKTKIIEMMPEFQKSSVRIKNPTRVEEIICGLIKGGAAKLQIITDFDMTLSRFSYKGKRCPTCHNIIDNCKLVTDECRKKLLQLKEKYYAIEVDPVLTVEEKYPYMVEWYTKSHGLLVQQALPKAKLKEIVAESDVMLKEGYENFFDKLQQHSIPVFIFSAGIGDVLEEVIRQAGVYHPNVKVVSNFMDFDETGVLKGFKGELIHVFNKHDGALRNTEYFNQLKDNSNIILLGDSQGDLRMADGVANVEHILKIGYLNDRVDELLEKYMDSYDIVLVQDESLEVANSILQKIL</sequence>
<name>5NT3A_HUMAN</name>